<dbReference type="EC" id="2.1.1.190" evidence="1"/>
<dbReference type="EMBL" id="CP000089">
    <property type="protein sequence ID" value="AAZ45607.1"/>
    <property type="molecule type" value="Genomic_DNA"/>
</dbReference>
<dbReference type="SMR" id="Q47HS4"/>
<dbReference type="STRING" id="159087.Daro_0851"/>
<dbReference type="KEGG" id="dar:Daro_0851"/>
<dbReference type="eggNOG" id="COG2265">
    <property type="taxonomic scope" value="Bacteria"/>
</dbReference>
<dbReference type="HOGENOM" id="CLU_014689_8_2_4"/>
<dbReference type="OrthoDB" id="9804590at2"/>
<dbReference type="GO" id="GO:0051539">
    <property type="term" value="F:4 iron, 4 sulfur cluster binding"/>
    <property type="evidence" value="ECO:0007669"/>
    <property type="project" value="UniProtKB-KW"/>
</dbReference>
<dbReference type="GO" id="GO:0005506">
    <property type="term" value="F:iron ion binding"/>
    <property type="evidence" value="ECO:0007669"/>
    <property type="project" value="UniProtKB-UniRule"/>
</dbReference>
<dbReference type="GO" id="GO:0003723">
    <property type="term" value="F:RNA binding"/>
    <property type="evidence" value="ECO:0007669"/>
    <property type="project" value="InterPro"/>
</dbReference>
<dbReference type="GO" id="GO:0070041">
    <property type="term" value="F:rRNA (uridine-C5-)-methyltransferase activity"/>
    <property type="evidence" value="ECO:0007669"/>
    <property type="project" value="UniProtKB-UniRule"/>
</dbReference>
<dbReference type="GO" id="GO:0070475">
    <property type="term" value="P:rRNA base methylation"/>
    <property type="evidence" value="ECO:0007669"/>
    <property type="project" value="TreeGrafter"/>
</dbReference>
<dbReference type="CDD" id="cd02440">
    <property type="entry name" value="AdoMet_MTases"/>
    <property type="match status" value="1"/>
</dbReference>
<dbReference type="Gene3D" id="2.40.50.1070">
    <property type="match status" value="1"/>
</dbReference>
<dbReference type="Gene3D" id="2.40.50.140">
    <property type="entry name" value="Nucleic acid-binding proteins"/>
    <property type="match status" value="1"/>
</dbReference>
<dbReference type="Gene3D" id="3.40.50.150">
    <property type="entry name" value="Vaccinia Virus protein VP39"/>
    <property type="match status" value="1"/>
</dbReference>
<dbReference type="HAMAP" id="MF_01010">
    <property type="entry name" value="23SrRNA_methyltr_RlmD"/>
    <property type="match status" value="1"/>
</dbReference>
<dbReference type="InterPro" id="IPR001566">
    <property type="entry name" value="23S_rRNA_MeTrfase_RlmD"/>
</dbReference>
<dbReference type="InterPro" id="IPR030390">
    <property type="entry name" value="MeTrfase_TrmA_AS"/>
</dbReference>
<dbReference type="InterPro" id="IPR030391">
    <property type="entry name" value="MeTrfase_TrmA_CS"/>
</dbReference>
<dbReference type="InterPro" id="IPR012340">
    <property type="entry name" value="NA-bd_OB-fold"/>
</dbReference>
<dbReference type="InterPro" id="IPR029063">
    <property type="entry name" value="SAM-dependent_MTases_sf"/>
</dbReference>
<dbReference type="InterPro" id="IPR010280">
    <property type="entry name" value="U5_MeTrfase_fam"/>
</dbReference>
<dbReference type="NCBIfam" id="NF009639">
    <property type="entry name" value="PRK13168.1"/>
    <property type="match status" value="1"/>
</dbReference>
<dbReference type="PANTHER" id="PTHR11061:SF49">
    <property type="entry name" value="23S RRNA (URACIL(1939)-C(5))-METHYLTRANSFERASE RLMD"/>
    <property type="match status" value="1"/>
</dbReference>
<dbReference type="PANTHER" id="PTHR11061">
    <property type="entry name" value="RNA M5U METHYLTRANSFERASE"/>
    <property type="match status" value="1"/>
</dbReference>
<dbReference type="Pfam" id="PF05958">
    <property type="entry name" value="tRNA_U5-meth_tr"/>
    <property type="match status" value="1"/>
</dbReference>
<dbReference type="SUPFAM" id="SSF50249">
    <property type="entry name" value="Nucleic acid-binding proteins"/>
    <property type="match status" value="1"/>
</dbReference>
<dbReference type="SUPFAM" id="SSF53335">
    <property type="entry name" value="S-adenosyl-L-methionine-dependent methyltransferases"/>
    <property type="match status" value="1"/>
</dbReference>
<dbReference type="PROSITE" id="PS51687">
    <property type="entry name" value="SAM_MT_RNA_M5U"/>
    <property type="match status" value="1"/>
</dbReference>
<dbReference type="PROSITE" id="PS01230">
    <property type="entry name" value="TRMA_1"/>
    <property type="match status" value="1"/>
</dbReference>
<dbReference type="PROSITE" id="PS01231">
    <property type="entry name" value="TRMA_2"/>
    <property type="match status" value="1"/>
</dbReference>
<comment type="function">
    <text evidence="1">Catalyzes the formation of 5-methyl-uridine at position 1939 (m5U1939) in 23S rRNA.</text>
</comment>
<comment type="catalytic activity">
    <reaction evidence="1">
        <text>uridine(1939) in 23S rRNA + S-adenosyl-L-methionine = 5-methyluridine(1939) in 23S rRNA + S-adenosyl-L-homocysteine + H(+)</text>
        <dbReference type="Rhea" id="RHEA:42908"/>
        <dbReference type="Rhea" id="RHEA-COMP:10278"/>
        <dbReference type="Rhea" id="RHEA-COMP:10279"/>
        <dbReference type="ChEBI" id="CHEBI:15378"/>
        <dbReference type="ChEBI" id="CHEBI:57856"/>
        <dbReference type="ChEBI" id="CHEBI:59789"/>
        <dbReference type="ChEBI" id="CHEBI:65315"/>
        <dbReference type="ChEBI" id="CHEBI:74447"/>
        <dbReference type="EC" id="2.1.1.190"/>
    </reaction>
</comment>
<comment type="similarity">
    <text evidence="1">Belongs to the class I-like SAM-binding methyltransferase superfamily. RNA M5U methyltransferase family. RlmD subfamily.</text>
</comment>
<sequence length="432" mass="47610">MPIGKIESLDHEARGITRQEGKAIFVDGALPGETVEYASFRRKSKFELAHLVHVIKPSTARVEPCCPHFGVCGGCAMQHMEPSAQVAAKQRVLEDSLWHIGRIRPETMLPPIQGEPWGYRHRARLAVRRVSKSGGMLIGFHEWRSSYIADIRSCAILPPHVSALLMPMRELFAALSIAERIREVDVAVGEHCTALLLRILDPLTPADERLLCDFVDRNDVVFYLQPKGPDTAFRFYPSGGPRLSYTLPEFGLEFDFKPTDFTQVNHAVNRVLVRRALRLLDPQPSERIADMFCGLGNFTLPIARSGATVIGVEGSAALVRRGRESAAANGLADHVEFGVANLFECTEQSLAALGRFDKMLIDPPREGAVELVRAIGKDAPKRIVYVSCNPGTLARDAAVLVTEKGYRFVSAGAVNMFPHTAHVESIAVFELP</sequence>
<proteinExistence type="inferred from homology"/>
<gene>
    <name evidence="1" type="primary">rlmD</name>
    <name type="synonym">rumA</name>
    <name type="ordered locus">Daro_0851</name>
</gene>
<accession>Q47HS4</accession>
<organism>
    <name type="scientific">Dechloromonas aromatica (strain RCB)</name>
    <dbReference type="NCBI Taxonomy" id="159087"/>
    <lineage>
        <taxon>Bacteria</taxon>
        <taxon>Pseudomonadati</taxon>
        <taxon>Pseudomonadota</taxon>
        <taxon>Betaproteobacteria</taxon>
        <taxon>Rhodocyclales</taxon>
        <taxon>Azonexaceae</taxon>
        <taxon>Dechloromonas</taxon>
    </lineage>
</organism>
<name>RLMD_DECAR</name>
<evidence type="ECO:0000255" key="1">
    <source>
        <dbReference type="HAMAP-Rule" id="MF_01010"/>
    </source>
</evidence>
<reference key="1">
    <citation type="journal article" date="2009" name="BMC Genomics">
        <title>Metabolic analysis of the soil microbe Dechloromonas aromatica str. RCB: indications of a surprisingly complex life-style and cryptic anaerobic pathways for aromatic degradation.</title>
        <authorList>
            <person name="Salinero K.K."/>
            <person name="Keller K."/>
            <person name="Feil W.S."/>
            <person name="Feil H."/>
            <person name="Trong S."/>
            <person name="Di Bartolo G."/>
            <person name="Lapidus A."/>
        </authorList>
    </citation>
    <scope>NUCLEOTIDE SEQUENCE [LARGE SCALE GENOMIC DNA]</scope>
    <source>
        <strain>RCB</strain>
    </source>
</reference>
<feature type="chain" id="PRO_0000229872" description="23S rRNA (uracil(1939)-C(5))-methyltransferase RlmD">
    <location>
        <begin position="1"/>
        <end position="432"/>
    </location>
</feature>
<feature type="domain" description="TRAM" evidence="1">
    <location>
        <begin position="1"/>
        <end position="53"/>
    </location>
</feature>
<feature type="active site" description="Nucleophile" evidence="1">
    <location>
        <position position="388"/>
    </location>
</feature>
<feature type="binding site" evidence="1">
    <location>
        <position position="66"/>
    </location>
    <ligand>
        <name>[4Fe-4S] cluster</name>
        <dbReference type="ChEBI" id="CHEBI:49883"/>
    </ligand>
</feature>
<feature type="binding site" evidence="1">
    <location>
        <position position="72"/>
    </location>
    <ligand>
        <name>[4Fe-4S] cluster</name>
        <dbReference type="ChEBI" id="CHEBI:49883"/>
    </ligand>
</feature>
<feature type="binding site" evidence="1">
    <location>
        <position position="75"/>
    </location>
    <ligand>
        <name>[4Fe-4S] cluster</name>
        <dbReference type="ChEBI" id="CHEBI:49883"/>
    </ligand>
</feature>
<feature type="binding site" evidence="1">
    <location>
        <position position="154"/>
    </location>
    <ligand>
        <name>[4Fe-4S] cluster</name>
        <dbReference type="ChEBI" id="CHEBI:49883"/>
    </ligand>
</feature>
<feature type="binding site" evidence="1">
    <location>
        <position position="263"/>
    </location>
    <ligand>
        <name>S-adenosyl-L-methionine</name>
        <dbReference type="ChEBI" id="CHEBI:59789"/>
    </ligand>
</feature>
<feature type="binding site" evidence="1">
    <location>
        <position position="292"/>
    </location>
    <ligand>
        <name>S-adenosyl-L-methionine</name>
        <dbReference type="ChEBI" id="CHEBI:59789"/>
    </ligand>
</feature>
<feature type="binding site" evidence="1">
    <location>
        <position position="297"/>
    </location>
    <ligand>
        <name>S-adenosyl-L-methionine</name>
        <dbReference type="ChEBI" id="CHEBI:59789"/>
    </ligand>
</feature>
<feature type="binding site" evidence="1">
    <location>
        <position position="313"/>
    </location>
    <ligand>
        <name>S-adenosyl-L-methionine</name>
        <dbReference type="ChEBI" id="CHEBI:59789"/>
    </ligand>
</feature>
<feature type="binding site" evidence="1">
    <location>
        <position position="341"/>
    </location>
    <ligand>
        <name>S-adenosyl-L-methionine</name>
        <dbReference type="ChEBI" id="CHEBI:59789"/>
    </ligand>
</feature>
<feature type="binding site" evidence="1">
    <location>
        <position position="362"/>
    </location>
    <ligand>
        <name>S-adenosyl-L-methionine</name>
        <dbReference type="ChEBI" id="CHEBI:59789"/>
    </ligand>
</feature>
<protein>
    <recommendedName>
        <fullName evidence="1">23S rRNA (uracil(1939)-C(5))-methyltransferase RlmD</fullName>
        <ecNumber evidence="1">2.1.1.190</ecNumber>
    </recommendedName>
    <alternativeName>
        <fullName evidence="1">23S rRNA(m5U1939)-methyltransferase</fullName>
    </alternativeName>
</protein>
<keyword id="KW-0004">4Fe-4S</keyword>
<keyword id="KW-0408">Iron</keyword>
<keyword id="KW-0411">Iron-sulfur</keyword>
<keyword id="KW-0479">Metal-binding</keyword>
<keyword id="KW-0489">Methyltransferase</keyword>
<keyword id="KW-0698">rRNA processing</keyword>
<keyword id="KW-0949">S-adenosyl-L-methionine</keyword>
<keyword id="KW-0808">Transferase</keyword>